<keyword id="KW-0488">Methylation</keyword>
<keyword id="KW-0687">Ribonucleoprotein</keyword>
<keyword id="KW-0689">Ribosomal protein</keyword>
<keyword id="KW-0694">RNA-binding</keyword>
<keyword id="KW-0699">rRNA-binding</keyword>
<keyword id="KW-0820">tRNA-binding</keyword>
<evidence type="ECO:0000250" key="1"/>
<evidence type="ECO:0000255" key="2">
    <source>
        <dbReference type="HAMAP-Rule" id="MF_00403"/>
    </source>
</evidence>
<evidence type="ECO:0000256" key="3">
    <source>
        <dbReference type="SAM" id="MobiDB-lite"/>
    </source>
</evidence>
<evidence type="ECO:0000305" key="4"/>
<name>RS12_ANAMM</name>
<reference key="1">
    <citation type="journal article" date="2005" name="Proc. Natl. Acad. Sci. U.S.A.">
        <title>Complete genome sequencing of Anaplasma marginale reveals that the surface is skewed to two superfamilies of outer membrane proteins.</title>
        <authorList>
            <person name="Brayton K.A."/>
            <person name="Kappmeyer L.S."/>
            <person name="Herndon D.R."/>
            <person name="Dark M.J."/>
            <person name="Tibbals D.L."/>
            <person name="Palmer G.H."/>
            <person name="McGuire T.C."/>
            <person name="Knowles D.P. Jr."/>
        </authorList>
    </citation>
    <scope>NUCLEOTIDE SEQUENCE [LARGE SCALE GENOMIC DNA]</scope>
    <source>
        <strain>St. Maries</strain>
    </source>
</reference>
<organism>
    <name type="scientific">Anaplasma marginale (strain St. Maries)</name>
    <dbReference type="NCBI Taxonomy" id="234826"/>
    <lineage>
        <taxon>Bacteria</taxon>
        <taxon>Pseudomonadati</taxon>
        <taxon>Pseudomonadota</taxon>
        <taxon>Alphaproteobacteria</taxon>
        <taxon>Rickettsiales</taxon>
        <taxon>Anaplasmataceae</taxon>
        <taxon>Anaplasma</taxon>
    </lineage>
</organism>
<protein>
    <recommendedName>
        <fullName evidence="2">Small ribosomal subunit protein uS12</fullName>
    </recommendedName>
    <alternativeName>
        <fullName evidence="4">30S ribosomal protein S12</fullName>
    </alternativeName>
</protein>
<sequence>MPTINQLVRRPRRPRESANKAPALQHNPQKRAVCVKVYTTTPKKPNSALRKVARVRIAGYGSEVIAYIPGEGHNLQEHSVVLIRGGRVKDLPGVRYHIVRGALDAKGVQGRKKARSKYGVKRGV</sequence>
<gene>
    <name evidence="2" type="primary">rpsL</name>
    <name type="ordered locus">AM249</name>
</gene>
<comment type="function">
    <text evidence="2">With S4 and S5 plays an important role in translational accuracy.</text>
</comment>
<comment type="function">
    <text evidence="2">Interacts with and stabilizes bases of the 16S rRNA that are involved in tRNA selection in the A site and with the mRNA backbone. Located at the interface of the 30S and 50S subunits, it traverses the body of the 30S subunit contacting proteins on the other side and probably holding the rRNA structure together. The combined cluster of proteins S8, S12 and S17 appears to hold together the shoulder and platform of the 30S subunit.</text>
</comment>
<comment type="subunit">
    <text evidence="2">Part of the 30S ribosomal subunit. Contacts proteins S8 and S17. May interact with IF1 in the 30S initiation complex.</text>
</comment>
<comment type="similarity">
    <text evidence="2">Belongs to the universal ribosomal protein uS12 family.</text>
</comment>
<feature type="chain" id="PRO_0000295949" description="Small ribosomal subunit protein uS12">
    <location>
        <begin position="1"/>
        <end position="124"/>
    </location>
</feature>
<feature type="region of interest" description="Disordered" evidence="3">
    <location>
        <begin position="1"/>
        <end position="29"/>
    </location>
</feature>
<feature type="modified residue" description="3-methylthioaspartic acid" evidence="1">
    <location>
        <position position="90"/>
    </location>
</feature>
<proteinExistence type="inferred from homology"/>
<accession>Q5PBH4</accession>
<dbReference type="EMBL" id="CP000030">
    <property type="protein sequence ID" value="AAV86355.1"/>
    <property type="molecule type" value="Genomic_DNA"/>
</dbReference>
<dbReference type="RefSeq" id="WP_010263054.1">
    <property type="nucleotide sequence ID" value="NZ_AFMU01000015.1"/>
</dbReference>
<dbReference type="SMR" id="Q5PBH4"/>
<dbReference type="GeneID" id="7398638"/>
<dbReference type="KEGG" id="ama:AM249"/>
<dbReference type="HOGENOM" id="CLU_104295_1_2_5"/>
<dbReference type="GO" id="GO:0015935">
    <property type="term" value="C:small ribosomal subunit"/>
    <property type="evidence" value="ECO:0007669"/>
    <property type="project" value="InterPro"/>
</dbReference>
<dbReference type="GO" id="GO:0019843">
    <property type="term" value="F:rRNA binding"/>
    <property type="evidence" value="ECO:0007669"/>
    <property type="project" value="UniProtKB-UniRule"/>
</dbReference>
<dbReference type="GO" id="GO:0003735">
    <property type="term" value="F:structural constituent of ribosome"/>
    <property type="evidence" value="ECO:0007669"/>
    <property type="project" value="InterPro"/>
</dbReference>
<dbReference type="GO" id="GO:0000049">
    <property type="term" value="F:tRNA binding"/>
    <property type="evidence" value="ECO:0007669"/>
    <property type="project" value="UniProtKB-UniRule"/>
</dbReference>
<dbReference type="GO" id="GO:0006412">
    <property type="term" value="P:translation"/>
    <property type="evidence" value="ECO:0007669"/>
    <property type="project" value="UniProtKB-UniRule"/>
</dbReference>
<dbReference type="CDD" id="cd03368">
    <property type="entry name" value="Ribosomal_S12"/>
    <property type="match status" value="1"/>
</dbReference>
<dbReference type="FunFam" id="2.40.50.140:FF:000001">
    <property type="entry name" value="30S ribosomal protein S12"/>
    <property type="match status" value="1"/>
</dbReference>
<dbReference type="Gene3D" id="2.40.50.140">
    <property type="entry name" value="Nucleic acid-binding proteins"/>
    <property type="match status" value="1"/>
</dbReference>
<dbReference type="HAMAP" id="MF_00403_B">
    <property type="entry name" value="Ribosomal_uS12_B"/>
    <property type="match status" value="1"/>
</dbReference>
<dbReference type="InterPro" id="IPR012340">
    <property type="entry name" value="NA-bd_OB-fold"/>
</dbReference>
<dbReference type="InterPro" id="IPR006032">
    <property type="entry name" value="Ribosomal_uS12"/>
</dbReference>
<dbReference type="InterPro" id="IPR005679">
    <property type="entry name" value="Ribosomal_uS12_bac"/>
</dbReference>
<dbReference type="NCBIfam" id="TIGR00981">
    <property type="entry name" value="rpsL_bact"/>
    <property type="match status" value="1"/>
</dbReference>
<dbReference type="PANTHER" id="PTHR11652">
    <property type="entry name" value="30S RIBOSOMAL PROTEIN S12 FAMILY MEMBER"/>
    <property type="match status" value="1"/>
</dbReference>
<dbReference type="Pfam" id="PF00164">
    <property type="entry name" value="Ribosom_S12_S23"/>
    <property type="match status" value="1"/>
</dbReference>
<dbReference type="PIRSF" id="PIRSF002133">
    <property type="entry name" value="Ribosomal_S12/S23"/>
    <property type="match status" value="1"/>
</dbReference>
<dbReference type="PRINTS" id="PR01034">
    <property type="entry name" value="RIBOSOMALS12"/>
</dbReference>
<dbReference type="SUPFAM" id="SSF50249">
    <property type="entry name" value="Nucleic acid-binding proteins"/>
    <property type="match status" value="1"/>
</dbReference>
<dbReference type="PROSITE" id="PS00055">
    <property type="entry name" value="RIBOSOMAL_S12"/>
    <property type="match status" value="1"/>
</dbReference>